<proteinExistence type="inferred from homology"/>
<gene>
    <name evidence="1" type="primary">mnmA</name>
    <name type="synonym">trmU</name>
    <name type="ordered locus">SAV_2753</name>
</gene>
<dbReference type="EC" id="2.8.1.13" evidence="1"/>
<dbReference type="EMBL" id="BA000030">
    <property type="protein sequence ID" value="BAC70464.1"/>
    <property type="molecule type" value="Genomic_DNA"/>
</dbReference>
<dbReference type="RefSeq" id="WP_010984185.1">
    <property type="nucleotide sequence ID" value="NZ_JZJK01000071.1"/>
</dbReference>
<dbReference type="SMR" id="Q82JK2"/>
<dbReference type="GeneID" id="41539841"/>
<dbReference type="KEGG" id="sma:SAVERM_2753"/>
<dbReference type="eggNOG" id="COG0482">
    <property type="taxonomic scope" value="Bacteria"/>
</dbReference>
<dbReference type="HOGENOM" id="CLU_035188_0_2_11"/>
<dbReference type="OrthoDB" id="9800696at2"/>
<dbReference type="Proteomes" id="UP000000428">
    <property type="component" value="Chromosome"/>
</dbReference>
<dbReference type="GO" id="GO:0005737">
    <property type="term" value="C:cytoplasm"/>
    <property type="evidence" value="ECO:0007669"/>
    <property type="project" value="UniProtKB-SubCell"/>
</dbReference>
<dbReference type="GO" id="GO:0005524">
    <property type="term" value="F:ATP binding"/>
    <property type="evidence" value="ECO:0007669"/>
    <property type="project" value="UniProtKB-KW"/>
</dbReference>
<dbReference type="GO" id="GO:0000049">
    <property type="term" value="F:tRNA binding"/>
    <property type="evidence" value="ECO:0007669"/>
    <property type="project" value="UniProtKB-KW"/>
</dbReference>
<dbReference type="GO" id="GO:0103016">
    <property type="term" value="F:tRNA-uridine 2-sulfurtransferase activity"/>
    <property type="evidence" value="ECO:0007669"/>
    <property type="project" value="UniProtKB-EC"/>
</dbReference>
<dbReference type="GO" id="GO:0002143">
    <property type="term" value="P:tRNA wobble position uridine thiolation"/>
    <property type="evidence" value="ECO:0007669"/>
    <property type="project" value="TreeGrafter"/>
</dbReference>
<dbReference type="CDD" id="cd01998">
    <property type="entry name" value="MnmA_TRMU-like"/>
    <property type="match status" value="1"/>
</dbReference>
<dbReference type="FunFam" id="2.30.30.280:FF:000001">
    <property type="entry name" value="tRNA-specific 2-thiouridylase MnmA"/>
    <property type="match status" value="1"/>
</dbReference>
<dbReference type="FunFam" id="2.40.30.10:FF:000096">
    <property type="entry name" value="tRNA-specific 2-thiouridylase MnmA"/>
    <property type="match status" value="1"/>
</dbReference>
<dbReference type="FunFam" id="3.40.50.620:FF:000057">
    <property type="entry name" value="tRNA-specific 2-thiouridylase MnmA"/>
    <property type="match status" value="1"/>
</dbReference>
<dbReference type="Gene3D" id="2.30.30.280">
    <property type="entry name" value="Adenine nucleotide alpha hydrolases-like domains"/>
    <property type="match status" value="1"/>
</dbReference>
<dbReference type="Gene3D" id="3.40.50.620">
    <property type="entry name" value="HUPs"/>
    <property type="match status" value="1"/>
</dbReference>
<dbReference type="Gene3D" id="2.40.30.10">
    <property type="entry name" value="Translation factors"/>
    <property type="match status" value="1"/>
</dbReference>
<dbReference type="HAMAP" id="MF_00144">
    <property type="entry name" value="tRNA_thiouridyl_MnmA"/>
    <property type="match status" value="1"/>
</dbReference>
<dbReference type="InterPro" id="IPR004506">
    <property type="entry name" value="MnmA-like"/>
</dbReference>
<dbReference type="InterPro" id="IPR046885">
    <property type="entry name" value="MnmA-like_C"/>
</dbReference>
<dbReference type="InterPro" id="IPR046884">
    <property type="entry name" value="MnmA-like_central"/>
</dbReference>
<dbReference type="InterPro" id="IPR023382">
    <property type="entry name" value="MnmA-like_central_sf"/>
</dbReference>
<dbReference type="InterPro" id="IPR014729">
    <property type="entry name" value="Rossmann-like_a/b/a_fold"/>
</dbReference>
<dbReference type="NCBIfam" id="NF001138">
    <property type="entry name" value="PRK00143.1"/>
    <property type="match status" value="1"/>
</dbReference>
<dbReference type="NCBIfam" id="TIGR00420">
    <property type="entry name" value="trmU"/>
    <property type="match status" value="1"/>
</dbReference>
<dbReference type="PANTHER" id="PTHR11933:SF5">
    <property type="entry name" value="MITOCHONDRIAL TRNA-SPECIFIC 2-THIOURIDYLASE 1"/>
    <property type="match status" value="1"/>
</dbReference>
<dbReference type="PANTHER" id="PTHR11933">
    <property type="entry name" value="TRNA 5-METHYLAMINOMETHYL-2-THIOURIDYLATE -METHYLTRANSFERASE"/>
    <property type="match status" value="1"/>
</dbReference>
<dbReference type="Pfam" id="PF03054">
    <property type="entry name" value="tRNA_Me_trans"/>
    <property type="match status" value="1"/>
</dbReference>
<dbReference type="Pfam" id="PF20258">
    <property type="entry name" value="tRNA_Me_trans_C"/>
    <property type="match status" value="1"/>
</dbReference>
<dbReference type="Pfam" id="PF20259">
    <property type="entry name" value="tRNA_Me_trans_M"/>
    <property type="match status" value="1"/>
</dbReference>
<dbReference type="SUPFAM" id="SSF52402">
    <property type="entry name" value="Adenine nucleotide alpha hydrolases-like"/>
    <property type="match status" value="1"/>
</dbReference>
<reference key="1">
    <citation type="journal article" date="2001" name="Proc. Natl. Acad. Sci. U.S.A.">
        <title>Genome sequence of an industrial microorganism Streptomyces avermitilis: deducing the ability of producing secondary metabolites.</title>
        <authorList>
            <person name="Omura S."/>
            <person name="Ikeda H."/>
            <person name="Ishikawa J."/>
            <person name="Hanamoto A."/>
            <person name="Takahashi C."/>
            <person name="Shinose M."/>
            <person name="Takahashi Y."/>
            <person name="Horikawa H."/>
            <person name="Nakazawa H."/>
            <person name="Osonoe T."/>
            <person name="Kikuchi H."/>
            <person name="Shiba T."/>
            <person name="Sakaki Y."/>
            <person name="Hattori M."/>
        </authorList>
    </citation>
    <scope>NUCLEOTIDE SEQUENCE [LARGE SCALE GENOMIC DNA]</scope>
    <source>
        <strain>ATCC 31267 / DSM 46492 / JCM 5070 / NBRC 14893 / NCIMB 12804 / NRRL 8165 / MA-4680</strain>
    </source>
</reference>
<reference key="2">
    <citation type="journal article" date="2003" name="Nat. Biotechnol.">
        <title>Complete genome sequence and comparative analysis of the industrial microorganism Streptomyces avermitilis.</title>
        <authorList>
            <person name="Ikeda H."/>
            <person name="Ishikawa J."/>
            <person name="Hanamoto A."/>
            <person name="Shinose M."/>
            <person name="Kikuchi H."/>
            <person name="Shiba T."/>
            <person name="Sakaki Y."/>
            <person name="Hattori M."/>
            <person name="Omura S."/>
        </authorList>
    </citation>
    <scope>NUCLEOTIDE SEQUENCE [LARGE SCALE GENOMIC DNA]</scope>
    <source>
        <strain>ATCC 31267 / DSM 46492 / JCM 5070 / NBRC 14893 / NCIMB 12804 / NRRL 8165 / MA-4680</strain>
    </source>
</reference>
<feature type="chain" id="PRO_1000009585" description="tRNA-specific 2-thiouridylase MnmA">
    <location>
        <begin position="1"/>
        <end position="376"/>
    </location>
</feature>
<feature type="region of interest" description="Interaction with tRNA" evidence="1">
    <location>
        <begin position="158"/>
        <end position="160"/>
    </location>
</feature>
<feature type="active site" description="Nucleophile" evidence="1">
    <location>
        <position position="111"/>
    </location>
</feature>
<feature type="active site" description="Cysteine persulfide intermediate" evidence="1">
    <location>
        <position position="210"/>
    </location>
</feature>
<feature type="binding site" evidence="1">
    <location>
        <begin position="16"/>
        <end position="23"/>
    </location>
    <ligand>
        <name>ATP</name>
        <dbReference type="ChEBI" id="CHEBI:30616"/>
    </ligand>
</feature>
<feature type="binding site" evidence="1">
    <location>
        <position position="42"/>
    </location>
    <ligand>
        <name>ATP</name>
        <dbReference type="ChEBI" id="CHEBI:30616"/>
    </ligand>
</feature>
<feature type="binding site" evidence="1">
    <location>
        <position position="135"/>
    </location>
    <ligand>
        <name>ATP</name>
        <dbReference type="ChEBI" id="CHEBI:30616"/>
    </ligand>
</feature>
<feature type="site" description="Interaction with tRNA" evidence="1">
    <location>
        <position position="136"/>
    </location>
</feature>
<feature type="site" description="Interaction with tRNA" evidence="1">
    <location>
        <position position="349"/>
    </location>
</feature>
<feature type="disulfide bond" description="Alternate" evidence="1">
    <location>
        <begin position="111"/>
        <end position="210"/>
    </location>
</feature>
<comment type="function">
    <text evidence="1">Catalyzes the 2-thiolation of uridine at the wobble position (U34) of tRNA, leading to the formation of s(2)U34.</text>
</comment>
<comment type="catalytic activity">
    <reaction evidence="1">
        <text>S-sulfanyl-L-cysteinyl-[protein] + uridine(34) in tRNA + AH2 + ATP = 2-thiouridine(34) in tRNA + L-cysteinyl-[protein] + A + AMP + diphosphate + H(+)</text>
        <dbReference type="Rhea" id="RHEA:47032"/>
        <dbReference type="Rhea" id="RHEA-COMP:10131"/>
        <dbReference type="Rhea" id="RHEA-COMP:11726"/>
        <dbReference type="Rhea" id="RHEA-COMP:11727"/>
        <dbReference type="Rhea" id="RHEA-COMP:11728"/>
        <dbReference type="ChEBI" id="CHEBI:13193"/>
        <dbReference type="ChEBI" id="CHEBI:15378"/>
        <dbReference type="ChEBI" id="CHEBI:17499"/>
        <dbReference type="ChEBI" id="CHEBI:29950"/>
        <dbReference type="ChEBI" id="CHEBI:30616"/>
        <dbReference type="ChEBI" id="CHEBI:33019"/>
        <dbReference type="ChEBI" id="CHEBI:61963"/>
        <dbReference type="ChEBI" id="CHEBI:65315"/>
        <dbReference type="ChEBI" id="CHEBI:87170"/>
        <dbReference type="ChEBI" id="CHEBI:456215"/>
        <dbReference type="EC" id="2.8.1.13"/>
    </reaction>
</comment>
<comment type="subcellular location">
    <subcellularLocation>
        <location evidence="1">Cytoplasm</location>
    </subcellularLocation>
</comment>
<comment type="similarity">
    <text evidence="1">Belongs to the MnmA/TRMU family.</text>
</comment>
<organism>
    <name type="scientific">Streptomyces avermitilis (strain ATCC 31267 / DSM 46492 / JCM 5070 / NBRC 14893 / NCIMB 12804 / NRRL 8165 / MA-4680)</name>
    <dbReference type="NCBI Taxonomy" id="227882"/>
    <lineage>
        <taxon>Bacteria</taxon>
        <taxon>Bacillati</taxon>
        <taxon>Actinomycetota</taxon>
        <taxon>Actinomycetes</taxon>
        <taxon>Kitasatosporales</taxon>
        <taxon>Streptomycetaceae</taxon>
        <taxon>Streptomyces</taxon>
    </lineage>
</organism>
<accession>Q82JK2</accession>
<sequence length="376" mass="39810">MTETPQRPRRLRVLAAMSGGVDSAVAAARAAEAGHDVTGVHLALSANPQSFRTGARGCCTIEDSRDARRAADVIGIPFYVWDLAERFREDVVEDFIAEYEAGRTPNPCLRCNEKIKFAALLDKALALGFDAVCTGHYAQVIVREDGTRELHRASDMAKDQSYVLGVLDDRQLAHALFPLGDTVTTKDEIRAEAERRGLAVAKKPDSHDICFIADGDTQGFLANRLGKAEGDIVDESGSVVGSHEGAYGFTIGQRKGLRIGTPAPDGKPRYVLDISPVDNTVTVGPAAALDVTALTAIKPRWCGAAPTGPGTYTAQLRAHGGETQVTAELVDGELQVTFAEPVRGVAPGQAVVLYDGTRVVGSATIATTTRTATAVA</sequence>
<keyword id="KW-0067">ATP-binding</keyword>
<keyword id="KW-0963">Cytoplasm</keyword>
<keyword id="KW-1015">Disulfide bond</keyword>
<keyword id="KW-0547">Nucleotide-binding</keyword>
<keyword id="KW-1185">Reference proteome</keyword>
<keyword id="KW-0694">RNA-binding</keyword>
<keyword id="KW-0808">Transferase</keyword>
<keyword id="KW-0819">tRNA processing</keyword>
<keyword id="KW-0820">tRNA-binding</keyword>
<protein>
    <recommendedName>
        <fullName evidence="1">tRNA-specific 2-thiouridylase MnmA</fullName>
        <ecNumber evidence="1">2.8.1.13</ecNumber>
    </recommendedName>
</protein>
<evidence type="ECO:0000255" key="1">
    <source>
        <dbReference type="HAMAP-Rule" id="MF_00144"/>
    </source>
</evidence>
<name>MNMA_STRAW</name>